<proteinExistence type="evidence at protein level"/>
<dbReference type="EC" id="2.4.1.356" evidence="8"/>
<dbReference type="EMBL" id="AM991130">
    <property type="protein sequence ID" value="CAQ51231.1"/>
    <property type="molecule type" value="Genomic_DNA"/>
</dbReference>
<dbReference type="EMBL" id="CP001956">
    <property type="protein sequence ID" value="ADE02287.1"/>
    <property type="molecule type" value="Genomic_DNA"/>
</dbReference>
<dbReference type="RefSeq" id="WP_004041407.1">
    <property type="nucleotide sequence ID" value="NC_013967.1"/>
</dbReference>
<dbReference type="SMR" id="D4GYH3"/>
<dbReference type="STRING" id="309800.HVO_1529"/>
<dbReference type="CAZy" id="GT2">
    <property type="family name" value="Glycosyltransferase Family 2"/>
</dbReference>
<dbReference type="PaxDb" id="309800-C498_03000"/>
<dbReference type="EnsemblBacteria" id="ADE02287">
    <property type="protein sequence ID" value="ADE02287"/>
    <property type="gene ID" value="HVO_1529"/>
</dbReference>
<dbReference type="GeneID" id="8926215"/>
<dbReference type="KEGG" id="hvo:HVO_1529"/>
<dbReference type="eggNOG" id="arCOG01387">
    <property type="taxonomic scope" value="Archaea"/>
</dbReference>
<dbReference type="HOGENOM" id="CLU_025996_19_2_2"/>
<dbReference type="OrthoDB" id="324632at2157"/>
<dbReference type="BioCyc" id="MetaCyc:MONOMER-19284"/>
<dbReference type="BRENDA" id="2.4.1.356">
    <property type="organism ID" value="2561"/>
</dbReference>
<dbReference type="UniPathway" id="UPA00977"/>
<dbReference type="Proteomes" id="UP000008243">
    <property type="component" value="Chromosome"/>
</dbReference>
<dbReference type="GO" id="GO:0005886">
    <property type="term" value="C:plasma membrane"/>
    <property type="evidence" value="ECO:0007669"/>
    <property type="project" value="UniProtKB-SubCell"/>
</dbReference>
<dbReference type="GO" id="GO:0016757">
    <property type="term" value="F:glycosyltransferase activity"/>
    <property type="evidence" value="ECO:0007669"/>
    <property type="project" value="UniProtKB-KW"/>
</dbReference>
<dbReference type="GO" id="GO:0045232">
    <property type="term" value="P:S-layer organization"/>
    <property type="evidence" value="ECO:0007669"/>
    <property type="project" value="UniProtKB-UniPathway"/>
</dbReference>
<dbReference type="CDD" id="cd00761">
    <property type="entry name" value="Glyco_tranf_GTA_type"/>
    <property type="match status" value="1"/>
</dbReference>
<dbReference type="Gene3D" id="3.90.550.10">
    <property type="entry name" value="Spore Coat Polysaccharide Biosynthesis Protein SpsA, Chain A"/>
    <property type="match status" value="1"/>
</dbReference>
<dbReference type="InterPro" id="IPR053553">
    <property type="entry name" value="GDP_glucuronosyltransferase"/>
</dbReference>
<dbReference type="InterPro" id="IPR001173">
    <property type="entry name" value="Glyco_trans_2-like"/>
</dbReference>
<dbReference type="InterPro" id="IPR050834">
    <property type="entry name" value="Glycosyltransf_2"/>
</dbReference>
<dbReference type="InterPro" id="IPR029044">
    <property type="entry name" value="Nucleotide-diphossugar_trans"/>
</dbReference>
<dbReference type="NCBIfam" id="NF041394">
    <property type="entry name" value="GtaseAglG_Halo"/>
    <property type="match status" value="1"/>
</dbReference>
<dbReference type="PANTHER" id="PTHR43685">
    <property type="entry name" value="GLYCOSYLTRANSFERASE"/>
    <property type="match status" value="1"/>
</dbReference>
<dbReference type="PANTHER" id="PTHR43685:SF2">
    <property type="entry name" value="GLYCOSYLTRANSFERASE 2-LIKE DOMAIN-CONTAINING PROTEIN"/>
    <property type="match status" value="1"/>
</dbReference>
<dbReference type="Pfam" id="PF00535">
    <property type="entry name" value="Glycos_transf_2"/>
    <property type="match status" value="1"/>
</dbReference>
<dbReference type="SUPFAM" id="SSF53448">
    <property type="entry name" value="Nucleotide-diphospho-sugar transferases"/>
    <property type="match status" value="1"/>
</dbReference>
<organism>
    <name type="scientific">Haloferax volcanii (strain ATCC 29605 / DSM 3757 / JCM 8879 / NBRC 14742 / NCIMB 2012 / VKM B-1768 / DS2)</name>
    <name type="common">Halobacterium volcanii</name>
    <dbReference type="NCBI Taxonomy" id="309800"/>
    <lineage>
        <taxon>Archaea</taxon>
        <taxon>Methanobacteriati</taxon>
        <taxon>Methanobacteriota</taxon>
        <taxon>Stenosarchaea group</taxon>
        <taxon>Halobacteria</taxon>
        <taxon>Halobacteriales</taxon>
        <taxon>Haloferacaceae</taxon>
        <taxon>Haloferax</taxon>
    </lineage>
</organism>
<comment type="function">
    <text evidence="2 3 4 5">Involved in the protein N-glycosylation pathway responsible for the assembly and attachment of an N-linked pentasaccharide that decorates the S-layer glycoprotein and flagellins (PubMed:18631242, PubMed:21091511, PubMed:22730124). Catalyzes the transfer of a glucuronate residue (GlcA) to a glucose residue already bound to a dolichol phosphate (DolP), a compound that serves as a glycan lipid carrier in Archaea. In vitro, is able to add GlcA to DolP-Glc in which the omega-position isoprene is not saturated. However, the likely physiological lipid substrate is alpha,omega-saturated (PubMed:28809486).</text>
</comment>
<comment type="catalytic activity">
    <reaction evidence="8">
        <text>an archaeal dolichyl alpha-D-glucosyl phosphate + UDP-alpha-D-glucuronate = an archaeal dolichyl beta-D-glucuronosyl-(1-&gt;4)-alpha-D-glucosyl phosphate + UDP + H(+)</text>
        <dbReference type="Rhea" id="RHEA:56160"/>
        <dbReference type="Rhea" id="RHEA-COMP:14396"/>
        <dbReference type="Rhea" id="RHEA-COMP:14397"/>
        <dbReference type="ChEBI" id="CHEBI:15378"/>
        <dbReference type="ChEBI" id="CHEBI:58052"/>
        <dbReference type="ChEBI" id="CHEBI:58223"/>
        <dbReference type="ChEBI" id="CHEBI:139561"/>
        <dbReference type="ChEBI" id="CHEBI:139562"/>
        <dbReference type="EC" id="2.4.1.356"/>
    </reaction>
    <physiologicalReaction direction="left-to-right" evidence="8">
        <dbReference type="Rhea" id="RHEA:56161"/>
    </physiologicalReaction>
</comment>
<comment type="pathway">
    <text evidence="2">Cell surface structure biogenesis; S-layer biogenesis.</text>
</comment>
<comment type="subcellular location">
    <subcellularLocation>
        <location evidence="5">Cell membrane</location>
        <topology evidence="7">Single-pass membrane protein</topology>
    </subcellularLocation>
</comment>
<comment type="disruption phenotype">
    <text evidence="3 4">Mutants contain only hexose-modified phosphodolichols and exhibit defective or limited motility.</text>
</comment>
<comment type="similarity">
    <text evidence="7">Belongs to the glycosyltransferase 2 family.</text>
</comment>
<evidence type="ECO:0000255" key="1"/>
<evidence type="ECO:0000269" key="2">
    <source>
    </source>
</evidence>
<evidence type="ECO:0000269" key="3">
    <source>
    </source>
</evidence>
<evidence type="ECO:0000269" key="4">
    <source>
    </source>
</evidence>
<evidence type="ECO:0000269" key="5">
    <source>
    </source>
</evidence>
<evidence type="ECO:0000303" key="6">
    <source>
    </source>
</evidence>
<evidence type="ECO:0000305" key="7"/>
<evidence type="ECO:0000305" key="8">
    <source>
    </source>
</evidence>
<accession>D4GYH3</accession>
<accession>B2G4W7</accession>
<keyword id="KW-1003">Cell membrane</keyword>
<keyword id="KW-0328">Glycosyltransferase</keyword>
<keyword id="KW-0472">Membrane</keyword>
<keyword id="KW-1185">Reference proteome</keyword>
<keyword id="KW-0808">Transferase</keyword>
<keyword id="KW-0812">Transmembrane</keyword>
<keyword id="KW-1133">Transmembrane helix</keyword>
<protein>
    <recommendedName>
        <fullName evidence="8">Glucosyl-dolichyl phosphate glucuronosyltransferase</fullName>
        <ecNumber evidence="8">2.4.1.356</ecNumber>
    </recommendedName>
    <alternativeName>
        <fullName>Archaeal glycosylation protein G</fullName>
    </alternativeName>
    <alternativeName>
        <fullName>Glycosyltransferase AglG</fullName>
    </alternativeName>
</protein>
<gene>
    <name evidence="6" type="primary">aglG</name>
    <name type="ordered locus">HVO_1529</name>
</gene>
<reference key="1">
    <citation type="journal article" date="2008" name="Mol. Microbiol.">
        <title>AglF, aglG and aglI, novel members of a gene island involved in the N-glycosylation of the Haloferax volcanii S-layer glycoprotein.</title>
        <authorList>
            <person name="Yurist-Doutsch S."/>
            <person name="Abu-Qarn M."/>
            <person name="Battaglia F."/>
            <person name="Morris H.R."/>
            <person name="Hitchen P.G."/>
            <person name="Dell A."/>
            <person name="Eichler J."/>
        </authorList>
    </citation>
    <scope>NUCLEOTIDE SEQUENCE [GENOMIC DNA]</scope>
    <scope>FUNCTION IN PROTEIN GLYCOSYLATION</scope>
    <scope>PATHWAY</scope>
    <scope>GENE NAME</scope>
    <source>
        <strain>DS2 / DS70</strain>
    </source>
</reference>
<reference key="2">
    <citation type="journal article" date="2010" name="PLoS ONE">
        <title>The complete genome sequence of Haloferax volcanii DS2, a model archaeon.</title>
        <authorList>
            <person name="Hartman A.L."/>
            <person name="Norais C."/>
            <person name="Badger J.H."/>
            <person name="Delmas S."/>
            <person name="Haldenby S."/>
            <person name="Madupu R."/>
            <person name="Robinson J."/>
            <person name="Khouri H."/>
            <person name="Ren Q."/>
            <person name="Lowe T.M."/>
            <person name="Maupin-Furlow J."/>
            <person name="Pohlschroder M."/>
            <person name="Daniels C."/>
            <person name="Pfeiffer F."/>
            <person name="Allers T."/>
            <person name="Eisen J.A."/>
        </authorList>
    </citation>
    <scope>NUCLEOTIDE SEQUENCE [LARGE SCALE GENOMIC DNA]</scope>
    <source>
        <strain>ATCC 29605 / DSM 3757 / JCM 8879 / NBRC 14742 / NCIMB 2012 / VKM B-1768 / DS2</strain>
    </source>
</reference>
<reference key="3">
    <citation type="journal article" date="2010" name="Mol. Microbiol.">
        <title>Distinct glycan-charged phosphodolichol carriers are required for the assembly of the pentasaccharide N-linked to the Haloferax volcanii S-layer glycoprotein.</title>
        <authorList>
            <person name="Guan Z."/>
            <person name="Naparstek S."/>
            <person name="Kaminski L."/>
            <person name="Konrad Z."/>
            <person name="Eichler J."/>
        </authorList>
    </citation>
    <scope>FUNCTION</scope>
    <scope>DISRUPTION PHENOTYPE</scope>
    <source>
        <strain>H53</strain>
    </source>
</reference>
<reference key="4">
    <citation type="journal article" date="2012" name="J. Bacteriol.">
        <title>N-glycosylation of Haloferax volcanii flagellins requires known Agl proteins and is essential for biosynthesis of stable flagella.</title>
        <authorList>
            <person name="Tripepi M."/>
            <person name="You J."/>
            <person name="Temel S."/>
            <person name="Onder O."/>
            <person name="Brisson D."/>
            <person name="Pohlschroder M."/>
        </authorList>
    </citation>
    <scope>FUNCTION IN GLYCOSYLATION OF FLAGELLINS</scope>
    <scope>DISRUPTION PHENOTYPE</scope>
    <source>
        <strain>H53</strain>
    </source>
</reference>
<reference key="5">
    <citation type="journal article" date="2017" name="Bioconj. Chem.">
        <title>Assembling Glycan-Charged Dolichol Phosphates: Chemoenzymatic Synthesis of a Haloferax volcanii N-Glycosylation Pathway Intermediate.</title>
        <authorList>
            <person name="Elharar Y."/>
            <person name="Podilapu A.R."/>
            <person name="Guan Z."/>
            <person name="Kulkarni S.S."/>
            <person name="Eichler J."/>
        </authorList>
    </citation>
    <scope>FUNCTION</scope>
    <scope>CATALYTIC ACTIVITY</scope>
    <scope>SUBCELLULAR LOCATION</scope>
</reference>
<name>AGLG_HALVD</name>
<feature type="chain" id="PRO_0000415421" description="Glucosyl-dolichyl phosphate glucuronosyltransferase">
    <location>
        <begin position="1"/>
        <end position="313"/>
    </location>
</feature>
<feature type="transmembrane region" description="Helical" evidence="1">
    <location>
        <begin position="284"/>
        <end position="304"/>
    </location>
</feature>
<sequence>MKVSVVVCTYSMERYESFSETVESVLAQTYEPLELVIVVDGNEEEFDRVQDDFGDIDDVVLHCNDENRGISYSRTKGAELGTGDVVAMIDDDATAEPDWIETLVDTYENNPDAVAVGGTVVPDWVARKPEFFPEEFYWLVGCDERGFGEHMEEVRNTYGSNISFKRDVFLEVGGYDTNTGRKGDKHVQAHEAPVCIRIYEQTGERVIYNKQARVNHKLFEYRTEFDWLVFRSFWQGYSKRVMDLLYPQASDDKNAYLKDLMLVYVVDRLKNLVEDPSLAQVQQLIAIFVFTAAVGFGYVYGLLTPNLVEKTNN</sequence>